<keyword id="KW-0030">Aminoacyl-tRNA synthetase</keyword>
<keyword id="KW-0067">ATP-binding</keyword>
<keyword id="KW-0963">Cytoplasm</keyword>
<keyword id="KW-0436">Ligase</keyword>
<keyword id="KW-0460">Magnesium</keyword>
<keyword id="KW-0479">Metal-binding</keyword>
<keyword id="KW-0547">Nucleotide-binding</keyword>
<keyword id="KW-0648">Protein biosynthesis</keyword>
<feature type="chain" id="PRO_1000059043" description="Lysine--tRNA ligase">
    <location>
        <begin position="1"/>
        <end position="506"/>
    </location>
</feature>
<feature type="binding site" evidence="1">
    <location>
        <position position="416"/>
    </location>
    <ligand>
        <name>Mg(2+)</name>
        <dbReference type="ChEBI" id="CHEBI:18420"/>
        <label>1</label>
    </ligand>
</feature>
<feature type="binding site" evidence="1">
    <location>
        <position position="423"/>
    </location>
    <ligand>
        <name>Mg(2+)</name>
        <dbReference type="ChEBI" id="CHEBI:18420"/>
        <label>1</label>
    </ligand>
</feature>
<feature type="binding site" evidence="1">
    <location>
        <position position="423"/>
    </location>
    <ligand>
        <name>Mg(2+)</name>
        <dbReference type="ChEBI" id="CHEBI:18420"/>
        <label>2</label>
    </ligand>
</feature>
<accession>Q2NRG1</accession>
<sequence length="506" mass="57721">MSESHSQDGAPQALDMNNELRSRREKLGQLRQQGIAFPNDFRRDAVSDQLHARYGEKSNEELEALNIEVSIAGRMMTRRIMGKASFATLQDVGGKIQLYVARDDLPEGQYNEQFKKWDLGDILGTRGKLFKTRTGELSVHCSEIRLLTKAMRPLPDKFHGLADQETRYRQRYLDLIANDESRQTFKVRSRIMAEIRRFMMDNDFMEVETPMMQTIPGGAAARPFITHHNALGIDMYLRIAPELYLKRLVVGGFERVFEINRNFRNEGLSPRHNPEFTMMELYMAYADYRDLIVLVETLFRTLTQRVLGSSVVHNGDQTFDFGKPFTQMTMKEAICHYRPETRPEALDDMASATAIAESLGIKVDKSWGLGRVQTEVFEETAESHLIQPTFITAYPAEVSPLARRNDDNPFFTDRFEFFIGGREIGNGFSELNDAEDQAARFAEQAQAKDAGDDEAMFYDEDYVTALEHGLPPTAGLGIGIDRLMMLLTNSHTIRDVILFPALRPQK</sequence>
<dbReference type="EC" id="6.1.1.6" evidence="1"/>
<dbReference type="EMBL" id="AP008232">
    <property type="protein sequence ID" value="BAE75264.1"/>
    <property type="molecule type" value="Genomic_DNA"/>
</dbReference>
<dbReference type="RefSeq" id="WP_011411719.1">
    <property type="nucleotide sequence ID" value="NC_007712.1"/>
</dbReference>
<dbReference type="SMR" id="Q2NRG1"/>
<dbReference type="STRING" id="343509.SG1989"/>
<dbReference type="KEGG" id="sgl:SG1989"/>
<dbReference type="eggNOG" id="COG1190">
    <property type="taxonomic scope" value="Bacteria"/>
</dbReference>
<dbReference type="HOGENOM" id="CLU_008255_6_0_6"/>
<dbReference type="OrthoDB" id="9801152at2"/>
<dbReference type="BioCyc" id="SGLO343509:SGP1_RS18305-MONOMER"/>
<dbReference type="Proteomes" id="UP000001932">
    <property type="component" value="Chromosome"/>
</dbReference>
<dbReference type="GO" id="GO:0005829">
    <property type="term" value="C:cytosol"/>
    <property type="evidence" value="ECO:0007669"/>
    <property type="project" value="TreeGrafter"/>
</dbReference>
<dbReference type="GO" id="GO:0005524">
    <property type="term" value="F:ATP binding"/>
    <property type="evidence" value="ECO:0007669"/>
    <property type="project" value="UniProtKB-UniRule"/>
</dbReference>
<dbReference type="GO" id="GO:0004824">
    <property type="term" value="F:lysine-tRNA ligase activity"/>
    <property type="evidence" value="ECO:0007669"/>
    <property type="project" value="UniProtKB-UniRule"/>
</dbReference>
<dbReference type="GO" id="GO:0000287">
    <property type="term" value="F:magnesium ion binding"/>
    <property type="evidence" value="ECO:0007669"/>
    <property type="project" value="UniProtKB-UniRule"/>
</dbReference>
<dbReference type="GO" id="GO:0000049">
    <property type="term" value="F:tRNA binding"/>
    <property type="evidence" value="ECO:0007669"/>
    <property type="project" value="TreeGrafter"/>
</dbReference>
<dbReference type="GO" id="GO:0006430">
    <property type="term" value="P:lysyl-tRNA aminoacylation"/>
    <property type="evidence" value="ECO:0007669"/>
    <property type="project" value="UniProtKB-UniRule"/>
</dbReference>
<dbReference type="CDD" id="cd00775">
    <property type="entry name" value="LysRS_core"/>
    <property type="match status" value="1"/>
</dbReference>
<dbReference type="CDD" id="cd04322">
    <property type="entry name" value="LysRS_N"/>
    <property type="match status" value="1"/>
</dbReference>
<dbReference type="FunFam" id="2.40.50.140:FF:000024">
    <property type="entry name" value="Lysine--tRNA ligase"/>
    <property type="match status" value="1"/>
</dbReference>
<dbReference type="FunFam" id="3.30.930.10:FF:000001">
    <property type="entry name" value="Lysine--tRNA ligase"/>
    <property type="match status" value="1"/>
</dbReference>
<dbReference type="Gene3D" id="3.30.930.10">
    <property type="entry name" value="Bira Bifunctional Protein, Domain 2"/>
    <property type="match status" value="1"/>
</dbReference>
<dbReference type="Gene3D" id="2.40.50.140">
    <property type="entry name" value="Nucleic acid-binding proteins"/>
    <property type="match status" value="1"/>
</dbReference>
<dbReference type="HAMAP" id="MF_00252">
    <property type="entry name" value="Lys_tRNA_synth_class2"/>
    <property type="match status" value="1"/>
</dbReference>
<dbReference type="InterPro" id="IPR004364">
    <property type="entry name" value="Aa-tRNA-synt_II"/>
</dbReference>
<dbReference type="InterPro" id="IPR006195">
    <property type="entry name" value="aa-tRNA-synth_II"/>
</dbReference>
<dbReference type="InterPro" id="IPR045864">
    <property type="entry name" value="aa-tRNA-synth_II/BPL/LPL"/>
</dbReference>
<dbReference type="InterPro" id="IPR002313">
    <property type="entry name" value="Lys-tRNA-ligase_II"/>
</dbReference>
<dbReference type="InterPro" id="IPR034762">
    <property type="entry name" value="Lys-tRNA-ligase_II_bac/euk"/>
</dbReference>
<dbReference type="InterPro" id="IPR044136">
    <property type="entry name" value="Lys-tRNA-ligase_II_N"/>
</dbReference>
<dbReference type="InterPro" id="IPR018149">
    <property type="entry name" value="Lys-tRNA-synth_II_C"/>
</dbReference>
<dbReference type="InterPro" id="IPR012340">
    <property type="entry name" value="NA-bd_OB-fold"/>
</dbReference>
<dbReference type="InterPro" id="IPR004365">
    <property type="entry name" value="NA-bd_OB_tRNA"/>
</dbReference>
<dbReference type="NCBIfam" id="TIGR00499">
    <property type="entry name" value="lysS_bact"/>
    <property type="match status" value="1"/>
</dbReference>
<dbReference type="NCBIfam" id="NF001756">
    <property type="entry name" value="PRK00484.1"/>
    <property type="match status" value="1"/>
</dbReference>
<dbReference type="PANTHER" id="PTHR42918:SF15">
    <property type="entry name" value="LYSINE--TRNA LIGASE, CHLOROPLASTIC_MITOCHONDRIAL"/>
    <property type="match status" value="1"/>
</dbReference>
<dbReference type="PANTHER" id="PTHR42918">
    <property type="entry name" value="LYSYL-TRNA SYNTHETASE"/>
    <property type="match status" value="1"/>
</dbReference>
<dbReference type="Pfam" id="PF00152">
    <property type="entry name" value="tRNA-synt_2"/>
    <property type="match status" value="1"/>
</dbReference>
<dbReference type="Pfam" id="PF01336">
    <property type="entry name" value="tRNA_anti-codon"/>
    <property type="match status" value="1"/>
</dbReference>
<dbReference type="PIRSF" id="PIRSF039101">
    <property type="entry name" value="LysRS2"/>
    <property type="match status" value="1"/>
</dbReference>
<dbReference type="PRINTS" id="PR00982">
    <property type="entry name" value="TRNASYNTHLYS"/>
</dbReference>
<dbReference type="SUPFAM" id="SSF55681">
    <property type="entry name" value="Class II aaRS and biotin synthetases"/>
    <property type="match status" value="1"/>
</dbReference>
<dbReference type="SUPFAM" id="SSF50249">
    <property type="entry name" value="Nucleic acid-binding proteins"/>
    <property type="match status" value="1"/>
</dbReference>
<dbReference type="PROSITE" id="PS50862">
    <property type="entry name" value="AA_TRNA_LIGASE_II"/>
    <property type="match status" value="1"/>
</dbReference>
<comment type="catalytic activity">
    <reaction evidence="1">
        <text>tRNA(Lys) + L-lysine + ATP = L-lysyl-tRNA(Lys) + AMP + diphosphate</text>
        <dbReference type="Rhea" id="RHEA:20792"/>
        <dbReference type="Rhea" id="RHEA-COMP:9696"/>
        <dbReference type="Rhea" id="RHEA-COMP:9697"/>
        <dbReference type="ChEBI" id="CHEBI:30616"/>
        <dbReference type="ChEBI" id="CHEBI:32551"/>
        <dbReference type="ChEBI" id="CHEBI:33019"/>
        <dbReference type="ChEBI" id="CHEBI:78442"/>
        <dbReference type="ChEBI" id="CHEBI:78529"/>
        <dbReference type="ChEBI" id="CHEBI:456215"/>
        <dbReference type="EC" id="6.1.1.6"/>
    </reaction>
</comment>
<comment type="cofactor">
    <cofactor evidence="1">
        <name>Mg(2+)</name>
        <dbReference type="ChEBI" id="CHEBI:18420"/>
    </cofactor>
    <text evidence="1">Binds 3 Mg(2+) ions per subunit.</text>
</comment>
<comment type="subunit">
    <text evidence="1">Homodimer.</text>
</comment>
<comment type="subcellular location">
    <subcellularLocation>
        <location evidence="1">Cytoplasm</location>
    </subcellularLocation>
</comment>
<comment type="similarity">
    <text evidence="1">Belongs to the class-II aminoacyl-tRNA synthetase family.</text>
</comment>
<reference key="1">
    <citation type="journal article" date="2006" name="Genome Res.">
        <title>Massive genome erosion and functional adaptations provide insights into the symbiotic lifestyle of Sodalis glossinidius in the tsetse host.</title>
        <authorList>
            <person name="Toh H."/>
            <person name="Weiss B.L."/>
            <person name="Perkin S.A.H."/>
            <person name="Yamashita A."/>
            <person name="Oshima K."/>
            <person name="Hattori M."/>
            <person name="Aksoy S."/>
        </authorList>
    </citation>
    <scope>NUCLEOTIDE SEQUENCE [LARGE SCALE GENOMIC DNA]</scope>
    <source>
        <strain>morsitans</strain>
    </source>
</reference>
<organism>
    <name type="scientific">Sodalis glossinidius (strain morsitans)</name>
    <dbReference type="NCBI Taxonomy" id="343509"/>
    <lineage>
        <taxon>Bacteria</taxon>
        <taxon>Pseudomonadati</taxon>
        <taxon>Pseudomonadota</taxon>
        <taxon>Gammaproteobacteria</taxon>
        <taxon>Enterobacterales</taxon>
        <taxon>Bruguierivoracaceae</taxon>
        <taxon>Sodalis</taxon>
    </lineage>
</organism>
<gene>
    <name evidence="1" type="primary">lysS</name>
    <name type="ordered locus">SG1989</name>
</gene>
<proteinExistence type="inferred from homology"/>
<name>SYK_SODGM</name>
<evidence type="ECO:0000255" key="1">
    <source>
        <dbReference type="HAMAP-Rule" id="MF_00252"/>
    </source>
</evidence>
<protein>
    <recommendedName>
        <fullName evidence="1">Lysine--tRNA ligase</fullName>
        <ecNumber evidence="1">6.1.1.6</ecNumber>
    </recommendedName>
    <alternativeName>
        <fullName evidence="1">Lysyl-tRNA synthetase</fullName>
        <shortName evidence="1">LysRS</shortName>
    </alternativeName>
</protein>